<comment type="function">
    <text evidence="2 10">Functions in nuclear protein import as an adapter protein for nuclear receptor KPNB1 (PubMed:8631802). Binds specifically and directly to substrates containing either a simple or bipartite NLS motif (PubMed:8631802). Docking of the importin/substrate complex to the nuclear pore complex (NPC) is mediated by KPNB1 through binding to nucleoporin FxFG repeats and the complex is subsequently translocated through the pore by an energy requiring, Ran-dependent mechanism (PubMed:8631802). At the nucleoplasmic side of the NPC, Ran binds to importin-beta and the three components separate and importin-alpha and -beta are re-exported from the nucleus to the cytoplasm where GTP hydrolysis releases Ran from importin (PubMed:8631802). The directionality of nuclear import is thought to be conferred by an asymmetric distribution of the GTP- and GDP-bound forms of Ran between the cytoplasm and nucleus (PubMed:8631802). Mediator of PR-DUB complex component BAP1 nuclear import; acts redundantly with and Transportin-1/TNPO1 (By similarity).</text>
</comment>
<comment type="subunit">
    <text evidence="2 3 6 7 8 9">Heterodimer; with KPNB1 (By similarity). Interacts with NSMF; the interaction occurs in a calcium-independent manner after synaptic NMDA receptor stimulation and is required for nuclear import of NSMF but is competed by CABP1 (By similarity). Interacts with APEX1 (via its N-terminus) (By similarity). Interacts with CTNNBL1 (via its N-terminal) (By similarity). Interacts with AICDA (via its NLS) (By similarity). Interacts with ANP32E (PubMed:10692581). Interacts with ZIC3 (PubMed:18716025). Interacts with SNAI1 (via zinc fingers) (By similarity). Interacts with DCAF8 (By similarity). Interacts with ITSN1 isoform 2 (PubMed:29599122). Interacts with TALDO1 isoform 1 (PubMed:27703206). Interacts with the AMPK-mediated 'Ser-659' phosphorylated form of ACSS2; this interaction results in nuclear translocation of ACSS2 (By similarity). Interacts with BAP1 (via C-terminus); the interaction contributes to BAP1 nuclear localization (By similarity).</text>
</comment>
<comment type="interaction">
    <interactant intactId="EBI-8573008">
        <id>Q60960</id>
    </interactant>
    <interactant intactId="EBI-744603">
        <id>Q15637</id>
        <label>SF1</label>
    </interactant>
    <organismsDiffer>true</organismsDiffer>
    <experiments>3</experiments>
</comment>
<comment type="subcellular location">
    <subcellularLocation>
        <location evidence="13">Cytoplasm</location>
    </subcellularLocation>
    <subcellularLocation>
        <location evidence="13">Nucleus</location>
    </subcellularLocation>
</comment>
<comment type="tissue specificity">
    <text evidence="10 11">Low levels in all tissues examined.</text>
</comment>
<comment type="domain">
    <text evidence="2">Consists of an N-terminal hydrophilic region, a hydrophobic central region composed of 10 repeats, and a short hydrophilic C-terminus. The N-terminal hydrophilic region contains the importin beta binding domain (IBB domain), which is sufficient for binding importin beta and essential for nuclear protein import.</text>
</comment>
<comment type="domain">
    <text evidence="1">The IBB domain is thought to act as an intrasteric autoregulatory sequence by interacting with the internal autoinhibitory NLS. Binding of KPNB1 probably overlaps the internal NLS and contributes to a high affinity for cytoplasmic NLS-containing cargo substrates. After dissociation of the importin/substrate complex in the nucleus the internal autohibitory NLS contributes to a low affinity for nuclear NLS-containing proteins (By similarity).</text>
</comment>
<comment type="domain">
    <text evidence="1">The major and minor NLS binding sites are mainly involved in recognition of simple or bipartite NLS motifs. Structurally located within in a helical surface groove they contain several conserved Trp and Asn residues of the corresponding third helices (H3) of ARM repeats which mainly contribute to binding (By similarity).</text>
</comment>
<comment type="PTM">
    <text evidence="2">Polyubiquitinated in the presence of RAG1 (in vitro).</text>
</comment>
<comment type="similarity">
    <text evidence="12">Belongs to the importin alpha family.</text>
</comment>
<accession>Q60960</accession>
<accession>Q3TF32</accession>
<evidence type="ECO:0000250" key="1">
    <source>
        <dbReference type="UniProtKB" id="P52293"/>
    </source>
</evidence>
<evidence type="ECO:0000250" key="2">
    <source>
        <dbReference type="UniProtKB" id="P52294"/>
    </source>
</evidence>
<evidence type="ECO:0000250" key="3">
    <source>
        <dbReference type="UniProtKB" id="P83953"/>
    </source>
</evidence>
<evidence type="ECO:0000255" key="4">
    <source>
        <dbReference type="PROSITE-ProRule" id="PRU00561"/>
    </source>
</evidence>
<evidence type="ECO:0000256" key="5">
    <source>
        <dbReference type="SAM" id="MobiDB-lite"/>
    </source>
</evidence>
<evidence type="ECO:0000269" key="6">
    <source>
    </source>
</evidence>
<evidence type="ECO:0000269" key="7">
    <source>
    </source>
</evidence>
<evidence type="ECO:0000269" key="8">
    <source>
    </source>
</evidence>
<evidence type="ECO:0000269" key="9">
    <source>
    </source>
</evidence>
<evidence type="ECO:0000269" key="10">
    <source>
    </source>
</evidence>
<evidence type="ECO:0000269" key="11">
    <source>
    </source>
</evidence>
<evidence type="ECO:0000305" key="12"/>
<evidence type="ECO:0000305" key="13">
    <source>
    </source>
</evidence>
<reference key="1">
    <citation type="journal article" date="1996" name="J. Biol. Chem.">
        <title>The nuclear localization signal of lymphoid enhancer factor-1 is recognized by two differentially expressed Srp1-nuclear localization sequence receptor proteins.</title>
        <authorList>
            <person name="Prieve M.G."/>
            <person name="Guttridge K.L."/>
            <person name="Waterman M.L."/>
        </authorList>
    </citation>
    <scope>NUCLEOTIDE SEQUENCE [MRNA]</scope>
    <scope>FUNCTION</scope>
    <scope>SUBCELLULAR LOCATION</scope>
    <scope>TISSUE SPECIFICITY</scope>
</reference>
<reference key="2">
    <citation type="journal article" date="1997" name="FEBS Lett.">
        <title>Identification of novel homologues of mouse importin alpha, the alpha subunit of the nuclear pore-targeting complex, and their tissue-specific expression.</title>
        <authorList>
            <person name="Tsuji L."/>
            <person name="Takumi T."/>
            <person name="Imamoto N."/>
            <person name="Yoneda Y."/>
        </authorList>
    </citation>
    <scope>SEQUENCE REVISION TO 83</scope>
    <scope>TISSUE SPECIFICITY</scope>
</reference>
<reference key="3">
    <citation type="journal article" date="2005" name="Science">
        <title>The transcriptional landscape of the mammalian genome.</title>
        <authorList>
            <person name="Carninci P."/>
            <person name="Kasukawa T."/>
            <person name="Katayama S."/>
            <person name="Gough J."/>
            <person name="Frith M.C."/>
            <person name="Maeda N."/>
            <person name="Oyama R."/>
            <person name="Ravasi T."/>
            <person name="Lenhard B."/>
            <person name="Wells C."/>
            <person name="Kodzius R."/>
            <person name="Shimokawa K."/>
            <person name="Bajic V.B."/>
            <person name="Brenner S.E."/>
            <person name="Batalov S."/>
            <person name="Forrest A.R."/>
            <person name="Zavolan M."/>
            <person name="Davis M.J."/>
            <person name="Wilming L.G."/>
            <person name="Aidinis V."/>
            <person name="Allen J.E."/>
            <person name="Ambesi-Impiombato A."/>
            <person name="Apweiler R."/>
            <person name="Aturaliya R.N."/>
            <person name="Bailey T.L."/>
            <person name="Bansal M."/>
            <person name="Baxter L."/>
            <person name="Beisel K.W."/>
            <person name="Bersano T."/>
            <person name="Bono H."/>
            <person name="Chalk A.M."/>
            <person name="Chiu K.P."/>
            <person name="Choudhary V."/>
            <person name="Christoffels A."/>
            <person name="Clutterbuck D.R."/>
            <person name="Crowe M.L."/>
            <person name="Dalla E."/>
            <person name="Dalrymple B.P."/>
            <person name="de Bono B."/>
            <person name="Della Gatta G."/>
            <person name="di Bernardo D."/>
            <person name="Down T."/>
            <person name="Engstrom P."/>
            <person name="Fagiolini M."/>
            <person name="Faulkner G."/>
            <person name="Fletcher C.F."/>
            <person name="Fukushima T."/>
            <person name="Furuno M."/>
            <person name="Futaki S."/>
            <person name="Gariboldi M."/>
            <person name="Georgii-Hemming P."/>
            <person name="Gingeras T.R."/>
            <person name="Gojobori T."/>
            <person name="Green R.E."/>
            <person name="Gustincich S."/>
            <person name="Harbers M."/>
            <person name="Hayashi Y."/>
            <person name="Hensch T.K."/>
            <person name="Hirokawa N."/>
            <person name="Hill D."/>
            <person name="Huminiecki L."/>
            <person name="Iacono M."/>
            <person name="Ikeo K."/>
            <person name="Iwama A."/>
            <person name="Ishikawa T."/>
            <person name="Jakt M."/>
            <person name="Kanapin A."/>
            <person name="Katoh M."/>
            <person name="Kawasawa Y."/>
            <person name="Kelso J."/>
            <person name="Kitamura H."/>
            <person name="Kitano H."/>
            <person name="Kollias G."/>
            <person name="Krishnan S.P."/>
            <person name="Kruger A."/>
            <person name="Kummerfeld S.K."/>
            <person name="Kurochkin I.V."/>
            <person name="Lareau L.F."/>
            <person name="Lazarevic D."/>
            <person name="Lipovich L."/>
            <person name="Liu J."/>
            <person name="Liuni S."/>
            <person name="McWilliam S."/>
            <person name="Madan Babu M."/>
            <person name="Madera M."/>
            <person name="Marchionni L."/>
            <person name="Matsuda H."/>
            <person name="Matsuzawa S."/>
            <person name="Miki H."/>
            <person name="Mignone F."/>
            <person name="Miyake S."/>
            <person name="Morris K."/>
            <person name="Mottagui-Tabar S."/>
            <person name="Mulder N."/>
            <person name="Nakano N."/>
            <person name="Nakauchi H."/>
            <person name="Ng P."/>
            <person name="Nilsson R."/>
            <person name="Nishiguchi S."/>
            <person name="Nishikawa S."/>
            <person name="Nori F."/>
            <person name="Ohara O."/>
            <person name="Okazaki Y."/>
            <person name="Orlando V."/>
            <person name="Pang K.C."/>
            <person name="Pavan W.J."/>
            <person name="Pavesi G."/>
            <person name="Pesole G."/>
            <person name="Petrovsky N."/>
            <person name="Piazza S."/>
            <person name="Reed J."/>
            <person name="Reid J.F."/>
            <person name="Ring B.Z."/>
            <person name="Ringwald M."/>
            <person name="Rost B."/>
            <person name="Ruan Y."/>
            <person name="Salzberg S.L."/>
            <person name="Sandelin A."/>
            <person name="Schneider C."/>
            <person name="Schoenbach C."/>
            <person name="Sekiguchi K."/>
            <person name="Semple C.A."/>
            <person name="Seno S."/>
            <person name="Sessa L."/>
            <person name="Sheng Y."/>
            <person name="Shibata Y."/>
            <person name="Shimada H."/>
            <person name="Shimada K."/>
            <person name="Silva D."/>
            <person name="Sinclair B."/>
            <person name="Sperling S."/>
            <person name="Stupka E."/>
            <person name="Sugiura K."/>
            <person name="Sultana R."/>
            <person name="Takenaka Y."/>
            <person name="Taki K."/>
            <person name="Tammoja K."/>
            <person name="Tan S.L."/>
            <person name="Tang S."/>
            <person name="Taylor M.S."/>
            <person name="Tegner J."/>
            <person name="Teichmann S.A."/>
            <person name="Ueda H.R."/>
            <person name="van Nimwegen E."/>
            <person name="Verardo R."/>
            <person name="Wei C.L."/>
            <person name="Yagi K."/>
            <person name="Yamanishi H."/>
            <person name="Zabarovsky E."/>
            <person name="Zhu S."/>
            <person name="Zimmer A."/>
            <person name="Hide W."/>
            <person name="Bult C."/>
            <person name="Grimmond S.M."/>
            <person name="Teasdale R.D."/>
            <person name="Liu E.T."/>
            <person name="Brusic V."/>
            <person name="Quackenbush J."/>
            <person name="Wahlestedt C."/>
            <person name="Mattick J.S."/>
            <person name="Hume D.A."/>
            <person name="Kai C."/>
            <person name="Sasaki D."/>
            <person name="Tomaru Y."/>
            <person name="Fukuda S."/>
            <person name="Kanamori-Katayama M."/>
            <person name="Suzuki M."/>
            <person name="Aoki J."/>
            <person name="Arakawa T."/>
            <person name="Iida J."/>
            <person name="Imamura K."/>
            <person name="Itoh M."/>
            <person name="Kato T."/>
            <person name="Kawaji H."/>
            <person name="Kawagashira N."/>
            <person name="Kawashima T."/>
            <person name="Kojima M."/>
            <person name="Kondo S."/>
            <person name="Konno H."/>
            <person name="Nakano K."/>
            <person name="Ninomiya N."/>
            <person name="Nishio T."/>
            <person name="Okada M."/>
            <person name="Plessy C."/>
            <person name="Shibata K."/>
            <person name="Shiraki T."/>
            <person name="Suzuki S."/>
            <person name="Tagami M."/>
            <person name="Waki K."/>
            <person name="Watahiki A."/>
            <person name="Okamura-Oho Y."/>
            <person name="Suzuki H."/>
            <person name="Kawai J."/>
            <person name="Hayashizaki Y."/>
        </authorList>
    </citation>
    <scope>NUCLEOTIDE SEQUENCE [LARGE SCALE MRNA]</scope>
    <source>
        <strain>C57BL/6J</strain>
        <strain>NOD</strain>
        <tissue>Brain</tissue>
    </source>
</reference>
<reference key="4">
    <citation type="journal article" date="2004" name="Genome Res.">
        <title>The status, quality, and expansion of the NIH full-length cDNA project: the Mammalian Gene Collection (MGC).</title>
        <authorList>
            <consortium name="The MGC Project Team"/>
        </authorList>
    </citation>
    <scope>NUCLEOTIDE SEQUENCE [LARGE SCALE MRNA]</scope>
</reference>
<reference key="5">
    <citation type="journal article" date="1994" name="Proc. Natl. Acad. Sci. U.S.A.">
        <title>RAG-1 interacts with the repeated amino acid motif of the human homologue of the yeast protein SRP1.</title>
        <authorList>
            <person name="Cortes P."/>
            <person name="Ye Z.-S."/>
            <person name="Baltimore D."/>
        </authorList>
    </citation>
    <scope>NUCLEOTIDE SEQUENCE [MRNA] OF 50-538</scope>
</reference>
<reference key="6">
    <citation type="journal article" date="2000" name="FEBS Lett.">
        <title>Characterization of the nuclear transport of a novel leucine-rich acidic nuclear protein-like protein.</title>
        <authorList>
            <person name="Matsubae M."/>
            <person name="Kurihara T."/>
            <person name="Tachibana T."/>
            <person name="Imamoto N."/>
            <person name="Yoneda Y."/>
        </authorList>
    </citation>
    <scope>INTERACTION WITH ANP32E</scope>
</reference>
<reference key="7">
    <citation type="journal article" date="2008" name="Hum. Mol. Genet.">
        <title>Functional and structural basis of the nuclear localization signal in the ZIC3 zinc finger domain.</title>
        <authorList>
            <person name="Hatayama M."/>
            <person name="Tomizawa T."/>
            <person name="Sakai-Kato K."/>
            <person name="Bouvagnet P."/>
            <person name="Kose S."/>
            <person name="Imamoto N."/>
            <person name="Yokoyama S."/>
            <person name="Utsunomiya-Tate N."/>
            <person name="Mikoshiba K."/>
            <person name="Kigawa T."/>
            <person name="Aruga J."/>
        </authorList>
    </citation>
    <scope>INTERACTION WITH ZIC3</scope>
</reference>
<reference key="8">
    <citation type="journal article" date="2010" name="Cell">
        <title>A tissue-specific atlas of mouse protein phosphorylation and expression.</title>
        <authorList>
            <person name="Huttlin E.L."/>
            <person name="Jedrychowski M.P."/>
            <person name="Elias J.E."/>
            <person name="Goswami T."/>
            <person name="Rad R."/>
            <person name="Beausoleil S.A."/>
            <person name="Villen J."/>
            <person name="Haas W."/>
            <person name="Sowa M.E."/>
            <person name="Gygi S.P."/>
        </authorList>
    </citation>
    <scope>IDENTIFICATION BY MASS SPECTROMETRY [LARGE SCALE ANALYSIS]</scope>
    <source>
        <tissue>Brain</tissue>
        <tissue>Brown adipose tissue</tissue>
        <tissue>Heart</tissue>
        <tissue>Liver</tissue>
        <tissue>Pancreas</tissue>
        <tissue>Spleen</tissue>
        <tissue>Testis</tissue>
    </source>
</reference>
<reference key="9">
    <citation type="journal article" date="2016" name="Sci. Rep.">
        <title>Two isoforms of TALDO1 generated by alternative translational initiation show differential nucleocytoplasmic distribution to regulate the global metabolic network.</title>
        <authorList>
            <person name="Moriyama T."/>
            <person name="Tanaka S."/>
            <person name="Nakayama Y."/>
            <person name="Fukumoto M."/>
            <person name="Tsujimura K."/>
            <person name="Yamada K."/>
            <person name="Bamba T."/>
            <person name="Yoneda Y."/>
            <person name="Fukusaki E."/>
            <person name="Oka M."/>
        </authorList>
    </citation>
    <scope>INTERACTION WITH TALDO1</scope>
</reference>
<reference key="10">
    <citation type="journal article" date="2018" name="Biochem. J.">
        <title>Intersectin goes nuclear: secret life of an endocytic protein.</title>
        <authorList>
            <person name="Alvisi G."/>
            <person name="Paolini L."/>
            <person name="Contarini A."/>
            <person name="Zambarda C."/>
            <person name="Di Antonio V."/>
            <person name="Colosini A."/>
            <person name="Mercandelli N."/>
            <person name="Timmoneri M."/>
            <person name="Palu G."/>
            <person name="Caimi L."/>
            <person name="Ricotta D."/>
            <person name="Radeghieri A."/>
        </authorList>
    </citation>
    <scope>INTERACTION WITH ITSN1 ISOFORM 2</scope>
</reference>
<sequence>MSTPGKENFRLKSYKNKSLNPDEMRRRREEEGLQLRKQKREEQLFKRRNVATAEEETEEEVMSDGGFHEAQINNMEMAPGGVITSDMTDMIFSNSPEQQLSATQKFRKLLSKEPNPPIDEVINTPGVVARFVEFLKRKENCTLQFESAWVLTNIASGNSLQTRNVIQAGAVPIFIELLSSEFEDVQEQAVWALGNIAGDSTMCRDYVLNCNILPPLLQLFSKQNRLTMTRNAVWALSNLCRGKSPPPEFAKVSPCLNVLSWLLFVSDTDVLADACWALSYLSDGPNDKIQAVIDAGVCRRLVELLMHNDYKVVSPALRAVGNIVTGDDIQTQVILNCSALQSLLHLLSSPKESIKKEACWTISNITAGNRAQIQTVIDANMFPALISILQTAEFRTRKEAAWAITNATSGGSAEQIKYLVELGCIKPLCDLLTVMDAKIVQVALNGLENILRLGEQEAKRNGSGINPYCALIEEAYGLDKIEFLQSHENQEIYQKAFDLIEHYFGTEDEDSSIAPQVDLSQQQYIFQQCEAPMEGFQL</sequence>
<gene>
    <name type="primary">Kpna1</name>
    <name type="synonym">Rch2</name>
</gene>
<name>IMA5_MOUSE</name>
<proteinExistence type="evidence at protein level"/>
<dbReference type="EMBL" id="U34228">
    <property type="protein sequence ID" value="AAC52450.1"/>
    <property type="molecule type" value="mRNA"/>
</dbReference>
<dbReference type="EMBL" id="AK028259">
    <property type="protein sequence ID" value="BAC25847.1"/>
    <property type="molecule type" value="mRNA"/>
</dbReference>
<dbReference type="EMBL" id="AK028307">
    <property type="protein sequence ID" value="BAC25872.1"/>
    <property type="molecule type" value="mRNA"/>
</dbReference>
<dbReference type="EMBL" id="AK154800">
    <property type="protein sequence ID" value="BAE32838.1"/>
    <property type="molecule type" value="mRNA"/>
</dbReference>
<dbReference type="EMBL" id="AK169311">
    <property type="protein sequence ID" value="BAE41066.1"/>
    <property type="molecule type" value="mRNA"/>
</dbReference>
<dbReference type="EMBL" id="AK169348">
    <property type="protein sequence ID" value="BAE41098.1"/>
    <property type="molecule type" value="mRNA"/>
</dbReference>
<dbReference type="EMBL" id="BC006771">
    <property type="protein sequence ID" value="AAH06771.1"/>
    <property type="molecule type" value="mRNA"/>
</dbReference>
<dbReference type="EMBL" id="U20619">
    <property type="status" value="NOT_ANNOTATED_CDS"/>
    <property type="molecule type" value="mRNA"/>
</dbReference>
<dbReference type="CCDS" id="CCDS28144.1"/>
<dbReference type="RefSeq" id="NP_001403647.1">
    <property type="nucleotide sequence ID" value="NM_001416718.1"/>
</dbReference>
<dbReference type="RefSeq" id="NP_032491.2">
    <property type="nucleotide sequence ID" value="NM_008465.5"/>
</dbReference>
<dbReference type="RefSeq" id="XP_006521877.1">
    <property type="nucleotide sequence ID" value="XM_006521814.3"/>
</dbReference>
<dbReference type="SMR" id="Q60960"/>
<dbReference type="BioGRID" id="201006">
    <property type="interactions" value="21"/>
</dbReference>
<dbReference type="ComplexPortal" id="CPX-1056">
    <property type="entry name" value="Importin complex, KPNA1 variant"/>
</dbReference>
<dbReference type="DIP" id="DIP-48614N"/>
<dbReference type="FunCoup" id="Q60960">
    <property type="interactions" value="2495"/>
</dbReference>
<dbReference type="IntAct" id="Q60960">
    <property type="interactions" value="5"/>
</dbReference>
<dbReference type="MINT" id="Q60960"/>
<dbReference type="STRING" id="10090.ENSMUSP00000004054"/>
<dbReference type="GlyGen" id="Q60960">
    <property type="glycosylation" value="2 sites, 1 N-linked glycan (1 site), 1 O-linked glycan (1 site)"/>
</dbReference>
<dbReference type="iPTMnet" id="Q60960"/>
<dbReference type="PhosphoSitePlus" id="Q60960"/>
<dbReference type="jPOST" id="Q60960"/>
<dbReference type="PaxDb" id="10090-ENSMUSP00000004054"/>
<dbReference type="PeptideAtlas" id="Q60960"/>
<dbReference type="ProteomicsDB" id="267240"/>
<dbReference type="Pumba" id="Q60960"/>
<dbReference type="Antibodypedia" id="32899">
    <property type="antibodies" value="387 antibodies from 38 providers"/>
</dbReference>
<dbReference type="DNASU" id="16646"/>
<dbReference type="Ensembl" id="ENSMUST00000004054.13">
    <property type="protein sequence ID" value="ENSMUSP00000004054.7"/>
    <property type="gene ID" value="ENSMUSG00000022905.13"/>
</dbReference>
<dbReference type="GeneID" id="16646"/>
<dbReference type="KEGG" id="mmu:16646"/>
<dbReference type="UCSC" id="uc007zcb.1">
    <property type="organism name" value="mouse"/>
</dbReference>
<dbReference type="AGR" id="MGI:103560"/>
<dbReference type="CTD" id="3836"/>
<dbReference type="MGI" id="MGI:103560">
    <property type="gene designation" value="Kpna1"/>
</dbReference>
<dbReference type="VEuPathDB" id="HostDB:ENSMUSG00000022905"/>
<dbReference type="eggNOG" id="KOG0166">
    <property type="taxonomic scope" value="Eukaryota"/>
</dbReference>
<dbReference type="GeneTree" id="ENSGT01050000244950"/>
<dbReference type="HOGENOM" id="CLU_018084_6_0_1"/>
<dbReference type="InParanoid" id="Q60960"/>
<dbReference type="OMA" id="MVRNATW"/>
<dbReference type="OrthoDB" id="29145at2759"/>
<dbReference type="PhylomeDB" id="Q60960"/>
<dbReference type="TreeFam" id="TF354205"/>
<dbReference type="Reactome" id="R-MMU-140342">
    <property type="pathway name" value="Apoptosis induced DNA fragmentation"/>
</dbReference>
<dbReference type="Reactome" id="R-MMU-68616">
    <property type="pathway name" value="Assembly of the ORC complex at the origin of replication"/>
</dbReference>
<dbReference type="Reactome" id="R-MMU-909733">
    <property type="pathway name" value="Interferon alpha/beta signaling"/>
</dbReference>
<dbReference type="BioGRID-ORCS" id="16646">
    <property type="hits" value="0 hits in 76 CRISPR screens"/>
</dbReference>
<dbReference type="CD-CODE" id="CE726F99">
    <property type="entry name" value="Postsynaptic density"/>
</dbReference>
<dbReference type="ChiTaRS" id="Kpna1">
    <property type="organism name" value="mouse"/>
</dbReference>
<dbReference type="PRO" id="PR:Q60960"/>
<dbReference type="Proteomes" id="UP000000589">
    <property type="component" value="Chromosome 16"/>
</dbReference>
<dbReference type="RNAct" id="Q60960">
    <property type="molecule type" value="protein"/>
</dbReference>
<dbReference type="Bgee" id="ENSMUSG00000022905">
    <property type="expression patterns" value="Expressed in triceps brachii and 276 other cell types or tissues"/>
</dbReference>
<dbReference type="ExpressionAtlas" id="Q60960">
    <property type="expression patterns" value="baseline and differential"/>
</dbReference>
<dbReference type="GO" id="GO:0005829">
    <property type="term" value="C:cytosol"/>
    <property type="evidence" value="ECO:0000303"/>
    <property type="project" value="ComplexPortal"/>
</dbReference>
<dbReference type="GO" id="GO:0030425">
    <property type="term" value="C:dendrite"/>
    <property type="evidence" value="ECO:0000250"/>
    <property type="project" value="UniProtKB"/>
</dbReference>
<dbReference type="GO" id="GO:0098978">
    <property type="term" value="C:glutamatergic synapse"/>
    <property type="evidence" value="ECO:0000314"/>
    <property type="project" value="SynGO"/>
</dbReference>
<dbReference type="GO" id="GO:0042564">
    <property type="term" value="C:NLS-dependent protein nuclear import complex"/>
    <property type="evidence" value="ECO:0000266"/>
    <property type="project" value="ComplexPortal"/>
</dbReference>
<dbReference type="GO" id="GO:0005654">
    <property type="term" value="C:nucleoplasm"/>
    <property type="evidence" value="ECO:0000303"/>
    <property type="project" value="ComplexPortal"/>
</dbReference>
<dbReference type="GO" id="GO:0005634">
    <property type="term" value="C:nucleus"/>
    <property type="evidence" value="ECO:0000250"/>
    <property type="project" value="UniProtKB"/>
</dbReference>
<dbReference type="GO" id="GO:0014069">
    <property type="term" value="C:postsynaptic density"/>
    <property type="evidence" value="ECO:0000314"/>
    <property type="project" value="SynGO"/>
</dbReference>
<dbReference type="GO" id="GO:0061608">
    <property type="term" value="F:nuclear import signal receptor activity"/>
    <property type="evidence" value="ECO:0007669"/>
    <property type="project" value="Ensembl"/>
</dbReference>
<dbReference type="GO" id="GO:0006607">
    <property type="term" value="P:NLS-bearing protein import into nucleus"/>
    <property type="evidence" value="ECO:0000315"/>
    <property type="project" value="MGI"/>
</dbReference>
<dbReference type="GO" id="GO:0099527">
    <property type="term" value="P:postsynapse to nucleus signaling pathway"/>
    <property type="evidence" value="ECO:0000314"/>
    <property type="project" value="SynGO"/>
</dbReference>
<dbReference type="GO" id="GO:0006606">
    <property type="term" value="P:protein import into nucleus"/>
    <property type="evidence" value="ECO:0000250"/>
    <property type="project" value="ComplexPortal"/>
</dbReference>
<dbReference type="GO" id="GO:0042981">
    <property type="term" value="P:regulation of apoptotic process"/>
    <property type="evidence" value="ECO:0000315"/>
    <property type="project" value="MGI"/>
</dbReference>
<dbReference type="GO" id="GO:0060828">
    <property type="term" value="P:regulation of canonical Wnt signaling pathway"/>
    <property type="evidence" value="ECO:0000315"/>
    <property type="project" value="MGI"/>
</dbReference>
<dbReference type="GO" id="GO:0014901">
    <property type="term" value="P:satellite cell activation involved in skeletal muscle regeneration"/>
    <property type="evidence" value="ECO:0000315"/>
    <property type="project" value="MGI"/>
</dbReference>
<dbReference type="GO" id="GO:0014841">
    <property type="term" value="P:skeletal muscle satellite cell proliferation"/>
    <property type="evidence" value="ECO:0000315"/>
    <property type="project" value="MGI"/>
</dbReference>
<dbReference type="GO" id="GO:0043403">
    <property type="term" value="P:skeletal muscle tissue regeneration"/>
    <property type="evidence" value="ECO:0000315"/>
    <property type="project" value="MGI"/>
</dbReference>
<dbReference type="FunFam" id="1.20.5.690:FF:000001">
    <property type="entry name" value="Importin subunit alpha"/>
    <property type="match status" value="1"/>
</dbReference>
<dbReference type="FunFam" id="1.25.10.10:FF:000013">
    <property type="entry name" value="Importin subunit alpha"/>
    <property type="match status" value="1"/>
</dbReference>
<dbReference type="Gene3D" id="1.20.5.690">
    <property type="entry name" value="Importin-alpha, importin-beta-binding domain"/>
    <property type="match status" value="1"/>
</dbReference>
<dbReference type="Gene3D" id="1.25.10.10">
    <property type="entry name" value="Leucine-rich Repeat Variant"/>
    <property type="match status" value="1"/>
</dbReference>
<dbReference type="InterPro" id="IPR011989">
    <property type="entry name" value="ARM-like"/>
</dbReference>
<dbReference type="InterPro" id="IPR016024">
    <property type="entry name" value="ARM-type_fold"/>
</dbReference>
<dbReference type="InterPro" id="IPR032413">
    <property type="entry name" value="Arm_3"/>
</dbReference>
<dbReference type="InterPro" id="IPR000225">
    <property type="entry name" value="Armadillo"/>
</dbReference>
<dbReference type="InterPro" id="IPR002652">
    <property type="entry name" value="Importin-a_IBB"/>
</dbReference>
<dbReference type="InterPro" id="IPR036975">
    <property type="entry name" value="Importin-a_IBB_sf"/>
</dbReference>
<dbReference type="InterPro" id="IPR024931">
    <property type="entry name" value="Importin_alpha"/>
</dbReference>
<dbReference type="PANTHER" id="PTHR23316">
    <property type="entry name" value="IMPORTIN ALPHA"/>
    <property type="match status" value="1"/>
</dbReference>
<dbReference type="Pfam" id="PF00514">
    <property type="entry name" value="Arm"/>
    <property type="match status" value="8"/>
</dbReference>
<dbReference type="Pfam" id="PF16186">
    <property type="entry name" value="Arm_3"/>
    <property type="match status" value="1"/>
</dbReference>
<dbReference type="Pfam" id="PF01749">
    <property type="entry name" value="IBB"/>
    <property type="match status" value="1"/>
</dbReference>
<dbReference type="PIRSF" id="PIRSF005673">
    <property type="entry name" value="Importin_alpha"/>
    <property type="match status" value="1"/>
</dbReference>
<dbReference type="SMART" id="SM00185">
    <property type="entry name" value="ARM"/>
    <property type="match status" value="8"/>
</dbReference>
<dbReference type="SUPFAM" id="SSF48371">
    <property type="entry name" value="ARM repeat"/>
    <property type="match status" value="1"/>
</dbReference>
<dbReference type="PROSITE" id="PS50176">
    <property type="entry name" value="ARM_REPEAT"/>
    <property type="match status" value="3"/>
</dbReference>
<dbReference type="PROSITE" id="PS51214">
    <property type="entry name" value="IBB"/>
    <property type="match status" value="1"/>
</dbReference>
<protein>
    <recommendedName>
        <fullName>Importin subunit alpha-5</fullName>
    </recommendedName>
    <alternativeName>
        <fullName>Importin alpha-S1</fullName>
    </alternativeName>
    <alternativeName>
        <fullName>Karyopherin subunit alpha-1</fullName>
    </alternativeName>
    <alternativeName>
        <fullName>Nucleoprotein interactor 1</fullName>
        <shortName>NPI-1</shortName>
    </alternativeName>
    <alternativeName>
        <fullName>RAG cohort protein 2</fullName>
    </alternativeName>
    <alternativeName>
        <fullName>SRP1-beta</fullName>
    </alternativeName>
</protein>
<feature type="chain" id="PRO_0000120720" description="Importin subunit alpha-5">
    <location>
        <begin position="1"/>
        <end position="538"/>
    </location>
</feature>
<feature type="domain" description="IBB" evidence="4">
    <location>
        <begin position="1"/>
        <end position="57"/>
    </location>
</feature>
<feature type="repeat" description="ARM 1; truncated">
    <location>
        <begin position="77"/>
        <end position="117"/>
    </location>
</feature>
<feature type="repeat" description="ARM 2">
    <location>
        <begin position="118"/>
        <end position="161"/>
    </location>
</feature>
<feature type="repeat" description="ARM 3">
    <location>
        <begin position="162"/>
        <end position="206"/>
    </location>
</feature>
<feature type="repeat" description="ARM 4">
    <location>
        <begin position="207"/>
        <end position="245"/>
    </location>
</feature>
<feature type="repeat" description="ARM 5">
    <location>
        <begin position="246"/>
        <end position="290"/>
    </location>
</feature>
<feature type="repeat" description="ARM 6">
    <location>
        <begin position="291"/>
        <end position="330"/>
    </location>
</feature>
<feature type="repeat" description="ARM 7">
    <location>
        <begin position="331"/>
        <end position="372"/>
    </location>
</feature>
<feature type="repeat" description="ARM 8">
    <location>
        <begin position="373"/>
        <end position="412"/>
    </location>
</feature>
<feature type="repeat" description="ARM 9">
    <location>
        <begin position="413"/>
        <end position="457"/>
    </location>
</feature>
<feature type="repeat" description="ARM 10; atypical">
    <location>
        <begin position="460"/>
        <end position="504"/>
    </location>
</feature>
<feature type="region of interest" description="Disordered" evidence="5">
    <location>
        <begin position="1"/>
        <end position="41"/>
    </location>
</feature>
<feature type="region of interest" description="NLS binding site (major)" evidence="1">
    <location>
        <begin position="149"/>
        <end position="241"/>
    </location>
</feature>
<feature type="region of interest" description="Binding to RAG1" evidence="2">
    <location>
        <begin position="245"/>
        <end position="437"/>
    </location>
</feature>
<feature type="region of interest" description="NLS binding site (minor)" evidence="1">
    <location>
        <begin position="318"/>
        <end position="406"/>
    </location>
</feature>
<feature type="short sequence motif" description="Nuclear localization signal" evidence="1">
    <location>
        <begin position="42"/>
        <end position="51"/>
    </location>
</feature>
<feature type="compositionally biased region" description="Basic and acidic residues" evidence="5">
    <location>
        <begin position="20"/>
        <end position="41"/>
    </location>
</feature>
<feature type="modified residue" description="N-acetylmethionine" evidence="2">
    <location>
        <position position="1"/>
    </location>
</feature>
<feature type="modified residue" description="Phosphothreonine" evidence="2">
    <location>
        <position position="3"/>
    </location>
</feature>
<feature type="modified residue" description="Phosphoserine" evidence="2">
    <location>
        <position position="63"/>
    </location>
</feature>
<feature type="sequence conflict" description="In Ref. 1; AAC52450." evidence="12" ref="1">
    <original>I</original>
    <variation>T</variation>
    <location>
        <position position="83"/>
    </location>
</feature>
<organism>
    <name type="scientific">Mus musculus</name>
    <name type="common">Mouse</name>
    <dbReference type="NCBI Taxonomy" id="10090"/>
    <lineage>
        <taxon>Eukaryota</taxon>
        <taxon>Metazoa</taxon>
        <taxon>Chordata</taxon>
        <taxon>Craniata</taxon>
        <taxon>Vertebrata</taxon>
        <taxon>Euteleostomi</taxon>
        <taxon>Mammalia</taxon>
        <taxon>Eutheria</taxon>
        <taxon>Euarchontoglires</taxon>
        <taxon>Glires</taxon>
        <taxon>Rodentia</taxon>
        <taxon>Myomorpha</taxon>
        <taxon>Muroidea</taxon>
        <taxon>Muridae</taxon>
        <taxon>Murinae</taxon>
        <taxon>Mus</taxon>
        <taxon>Mus</taxon>
    </lineage>
</organism>
<keyword id="KW-0007">Acetylation</keyword>
<keyword id="KW-0963">Cytoplasm</keyword>
<keyword id="KW-0539">Nucleus</keyword>
<keyword id="KW-0597">Phosphoprotein</keyword>
<keyword id="KW-0653">Protein transport</keyword>
<keyword id="KW-1185">Reference proteome</keyword>
<keyword id="KW-0677">Repeat</keyword>
<keyword id="KW-0813">Transport</keyword>
<keyword id="KW-0832">Ubl conjugation</keyword>